<reference key="1">
    <citation type="journal article" date="2007" name="J. Bacteriol.">
        <title>Genome sequence and analysis of the soil cellulolytic actinomycete Thermobifida fusca YX.</title>
        <authorList>
            <person name="Lykidis A."/>
            <person name="Mavromatis K."/>
            <person name="Ivanova N."/>
            <person name="Anderson I."/>
            <person name="Land M."/>
            <person name="DiBartolo G."/>
            <person name="Martinez M."/>
            <person name="Lapidus A."/>
            <person name="Lucas S."/>
            <person name="Copeland A."/>
            <person name="Richardson P."/>
            <person name="Wilson D.B."/>
            <person name="Kyrpides N."/>
        </authorList>
    </citation>
    <scope>NUCLEOTIDE SEQUENCE [LARGE SCALE GENOMIC DNA]</scope>
    <source>
        <strain>YX</strain>
    </source>
</reference>
<dbReference type="EMBL" id="CP000088">
    <property type="protein sequence ID" value="AAZ56097.1"/>
    <property type="molecule type" value="Genomic_DNA"/>
</dbReference>
<dbReference type="RefSeq" id="WP_011292487.1">
    <property type="nucleotide sequence ID" value="NC_007333.1"/>
</dbReference>
<dbReference type="SMR" id="Q47N72"/>
<dbReference type="STRING" id="269800.Tfu_2064"/>
<dbReference type="KEGG" id="tfu:Tfu_2064"/>
<dbReference type="eggNOG" id="COG0292">
    <property type="taxonomic scope" value="Bacteria"/>
</dbReference>
<dbReference type="HOGENOM" id="CLU_123265_0_0_11"/>
<dbReference type="OrthoDB" id="9808966at2"/>
<dbReference type="GO" id="GO:1990904">
    <property type="term" value="C:ribonucleoprotein complex"/>
    <property type="evidence" value="ECO:0007669"/>
    <property type="project" value="UniProtKB-KW"/>
</dbReference>
<dbReference type="GO" id="GO:0005840">
    <property type="term" value="C:ribosome"/>
    <property type="evidence" value="ECO:0007669"/>
    <property type="project" value="UniProtKB-KW"/>
</dbReference>
<dbReference type="GO" id="GO:0019843">
    <property type="term" value="F:rRNA binding"/>
    <property type="evidence" value="ECO:0007669"/>
    <property type="project" value="UniProtKB-UniRule"/>
</dbReference>
<dbReference type="GO" id="GO:0003735">
    <property type="term" value="F:structural constituent of ribosome"/>
    <property type="evidence" value="ECO:0007669"/>
    <property type="project" value="InterPro"/>
</dbReference>
<dbReference type="GO" id="GO:0000027">
    <property type="term" value="P:ribosomal large subunit assembly"/>
    <property type="evidence" value="ECO:0007669"/>
    <property type="project" value="UniProtKB-UniRule"/>
</dbReference>
<dbReference type="GO" id="GO:0006412">
    <property type="term" value="P:translation"/>
    <property type="evidence" value="ECO:0007669"/>
    <property type="project" value="InterPro"/>
</dbReference>
<dbReference type="CDD" id="cd07026">
    <property type="entry name" value="Ribosomal_L20"/>
    <property type="match status" value="1"/>
</dbReference>
<dbReference type="FunFam" id="1.10.1900.20:FF:000001">
    <property type="entry name" value="50S ribosomal protein L20"/>
    <property type="match status" value="1"/>
</dbReference>
<dbReference type="Gene3D" id="6.10.160.10">
    <property type="match status" value="1"/>
</dbReference>
<dbReference type="Gene3D" id="1.10.1900.20">
    <property type="entry name" value="Ribosomal protein L20"/>
    <property type="match status" value="1"/>
</dbReference>
<dbReference type="HAMAP" id="MF_00382">
    <property type="entry name" value="Ribosomal_bL20"/>
    <property type="match status" value="1"/>
</dbReference>
<dbReference type="InterPro" id="IPR005813">
    <property type="entry name" value="Ribosomal_bL20"/>
</dbReference>
<dbReference type="InterPro" id="IPR049946">
    <property type="entry name" value="RIBOSOMAL_L20_CS"/>
</dbReference>
<dbReference type="InterPro" id="IPR035566">
    <property type="entry name" value="Ribosomal_protein_bL20_C"/>
</dbReference>
<dbReference type="NCBIfam" id="TIGR01032">
    <property type="entry name" value="rplT_bact"/>
    <property type="match status" value="1"/>
</dbReference>
<dbReference type="PANTHER" id="PTHR10986">
    <property type="entry name" value="39S RIBOSOMAL PROTEIN L20"/>
    <property type="match status" value="1"/>
</dbReference>
<dbReference type="Pfam" id="PF00453">
    <property type="entry name" value="Ribosomal_L20"/>
    <property type="match status" value="1"/>
</dbReference>
<dbReference type="PRINTS" id="PR00062">
    <property type="entry name" value="RIBOSOMALL20"/>
</dbReference>
<dbReference type="SUPFAM" id="SSF74731">
    <property type="entry name" value="Ribosomal protein L20"/>
    <property type="match status" value="1"/>
</dbReference>
<dbReference type="PROSITE" id="PS00937">
    <property type="entry name" value="RIBOSOMAL_L20"/>
    <property type="match status" value="1"/>
</dbReference>
<organism>
    <name type="scientific">Thermobifida fusca (strain YX)</name>
    <dbReference type="NCBI Taxonomy" id="269800"/>
    <lineage>
        <taxon>Bacteria</taxon>
        <taxon>Bacillati</taxon>
        <taxon>Actinomycetota</taxon>
        <taxon>Actinomycetes</taxon>
        <taxon>Streptosporangiales</taxon>
        <taxon>Nocardiopsidaceae</taxon>
        <taxon>Thermobifida</taxon>
    </lineage>
</organism>
<protein>
    <recommendedName>
        <fullName evidence="1">Large ribosomal subunit protein bL20</fullName>
    </recommendedName>
    <alternativeName>
        <fullName evidence="2">50S ribosomal protein L20</fullName>
    </alternativeName>
</protein>
<feature type="chain" id="PRO_0000243752" description="Large ribosomal subunit protein bL20">
    <location>
        <begin position="1"/>
        <end position="125"/>
    </location>
</feature>
<proteinExistence type="inferred from homology"/>
<gene>
    <name evidence="1" type="primary">rplT</name>
    <name type="ordered locus">Tfu_2064</name>
</gene>
<evidence type="ECO:0000255" key="1">
    <source>
        <dbReference type="HAMAP-Rule" id="MF_00382"/>
    </source>
</evidence>
<evidence type="ECO:0000305" key="2"/>
<accession>Q47N72</accession>
<sequence length="125" mass="14265">MARVKRSLNAKKKRRVVLSQAKGYRGQRSRLYRKAKEQMLHSMTYAYRDRKDRKGQFRRLWIQRINAASRAHGLTYNRFMQGLKAAGIEVDRRMLAELAVNDAAAFAALVETAKKAIPAPSESAA</sequence>
<keyword id="KW-0687">Ribonucleoprotein</keyword>
<keyword id="KW-0689">Ribosomal protein</keyword>
<keyword id="KW-0694">RNA-binding</keyword>
<keyword id="KW-0699">rRNA-binding</keyword>
<comment type="function">
    <text evidence="1">Binds directly to 23S ribosomal RNA and is necessary for the in vitro assembly process of the 50S ribosomal subunit. It is not involved in the protein synthesizing functions of that subunit.</text>
</comment>
<comment type="similarity">
    <text evidence="1">Belongs to the bacterial ribosomal protein bL20 family.</text>
</comment>
<name>RL20_THEFY</name>